<organism>
    <name type="scientific">Escherichia coli (strain SMS-3-5 / SECEC)</name>
    <dbReference type="NCBI Taxonomy" id="439855"/>
    <lineage>
        <taxon>Bacteria</taxon>
        <taxon>Pseudomonadati</taxon>
        <taxon>Pseudomonadota</taxon>
        <taxon>Gammaproteobacteria</taxon>
        <taxon>Enterobacterales</taxon>
        <taxon>Enterobacteriaceae</taxon>
        <taxon>Escherichia</taxon>
    </lineage>
</organism>
<gene>
    <name evidence="1" type="primary">fadR</name>
    <name type="ordered locus">EcSMS35_1962</name>
</gene>
<keyword id="KW-0010">Activator</keyword>
<keyword id="KW-0963">Cytoplasm</keyword>
<keyword id="KW-0238">DNA-binding</keyword>
<keyword id="KW-0276">Fatty acid metabolism</keyword>
<keyword id="KW-0443">Lipid metabolism</keyword>
<keyword id="KW-0678">Repressor</keyword>
<keyword id="KW-0804">Transcription</keyword>
<keyword id="KW-0805">Transcription regulation</keyword>
<comment type="function">
    <text evidence="1">Multifunctional regulator of fatty acid metabolism.</text>
</comment>
<comment type="subunit">
    <text evidence="1">Homodimer.</text>
</comment>
<comment type="subcellular location">
    <subcellularLocation>
        <location evidence="1">Cytoplasm</location>
    </subcellularLocation>
</comment>
<dbReference type="EMBL" id="CP000970">
    <property type="protein sequence ID" value="ACB17220.1"/>
    <property type="molecule type" value="Genomic_DNA"/>
</dbReference>
<dbReference type="RefSeq" id="WP_000234823.1">
    <property type="nucleotide sequence ID" value="NC_010498.1"/>
</dbReference>
<dbReference type="SMR" id="B1LHY0"/>
<dbReference type="GeneID" id="93776245"/>
<dbReference type="KEGG" id="ecm:EcSMS35_1962"/>
<dbReference type="HOGENOM" id="CLU_017584_9_4_6"/>
<dbReference type="Proteomes" id="UP000007011">
    <property type="component" value="Chromosome"/>
</dbReference>
<dbReference type="GO" id="GO:0005737">
    <property type="term" value="C:cytoplasm"/>
    <property type="evidence" value="ECO:0007669"/>
    <property type="project" value="UniProtKB-SubCell"/>
</dbReference>
<dbReference type="GO" id="GO:0003677">
    <property type="term" value="F:DNA binding"/>
    <property type="evidence" value="ECO:0007669"/>
    <property type="project" value="UniProtKB-KW"/>
</dbReference>
<dbReference type="GO" id="GO:0003700">
    <property type="term" value="F:DNA-binding transcription factor activity"/>
    <property type="evidence" value="ECO:0007669"/>
    <property type="project" value="UniProtKB-UniRule"/>
</dbReference>
<dbReference type="GO" id="GO:0000062">
    <property type="term" value="F:fatty-acyl-CoA binding"/>
    <property type="evidence" value="ECO:0007669"/>
    <property type="project" value="InterPro"/>
</dbReference>
<dbReference type="GO" id="GO:0006631">
    <property type="term" value="P:fatty acid metabolic process"/>
    <property type="evidence" value="ECO:0007669"/>
    <property type="project" value="UniProtKB-KW"/>
</dbReference>
<dbReference type="GO" id="GO:0019217">
    <property type="term" value="P:regulation of fatty acid metabolic process"/>
    <property type="evidence" value="ECO:0007669"/>
    <property type="project" value="UniProtKB-UniRule"/>
</dbReference>
<dbReference type="CDD" id="cd07377">
    <property type="entry name" value="WHTH_GntR"/>
    <property type="match status" value="1"/>
</dbReference>
<dbReference type="FunFam" id="1.10.10.10:FF:000036">
    <property type="entry name" value="Fatty acid metabolism regulator protein"/>
    <property type="match status" value="1"/>
</dbReference>
<dbReference type="FunFam" id="1.20.120.530:FF:000003">
    <property type="entry name" value="Fatty acid metabolism regulator protein"/>
    <property type="match status" value="1"/>
</dbReference>
<dbReference type="Gene3D" id="1.20.120.530">
    <property type="entry name" value="GntR ligand-binding domain-like"/>
    <property type="match status" value="1"/>
</dbReference>
<dbReference type="Gene3D" id="1.10.10.10">
    <property type="entry name" value="Winged helix-like DNA-binding domain superfamily/Winged helix DNA-binding domain"/>
    <property type="match status" value="1"/>
</dbReference>
<dbReference type="HAMAP" id="MF_00696">
    <property type="entry name" value="HTH_FadR"/>
    <property type="match status" value="1"/>
</dbReference>
<dbReference type="InterPro" id="IPR014178">
    <property type="entry name" value="FA-response_TF_FadR"/>
</dbReference>
<dbReference type="InterPro" id="IPR028374">
    <property type="entry name" value="FadR_C"/>
</dbReference>
<dbReference type="InterPro" id="IPR008920">
    <property type="entry name" value="TF_FadR/GntR_C"/>
</dbReference>
<dbReference type="InterPro" id="IPR000524">
    <property type="entry name" value="Tscrpt_reg_HTH_GntR"/>
</dbReference>
<dbReference type="InterPro" id="IPR036388">
    <property type="entry name" value="WH-like_DNA-bd_sf"/>
</dbReference>
<dbReference type="InterPro" id="IPR036390">
    <property type="entry name" value="WH_DNA-bd_sf"/>
</dbReference>
<dbReference type="NCBIfam" id="TIGR02812">
    <property type="entry name" value="fadR_gamma"/>
    <property type="match status" value="1"/>
</dbReference>
<dbReference type="NCBIfam" id="NF003444">
    <property type="entry name" value="PRK04984.1"/>
    <property type="match status" value="1"/>
</dbReference>
<dbReference type="PANTHER" id="PTHR43537:SF52">
    <property type="entry name" value="FATTY ACID METABOLISM REGULATOR PROTEIN"/>
    <property type="match status" value="1"/>
</dbReference>
<dbReference type="PANTHER" id="PTHR43537">
    <property type="entry name" value="TRANSCRIPTIONAL REGULATOR, GNTR FAMILY"/>
    <property type="match status" value="1"/>
</dbReference>
<dbReference type="Pfam" id="PF07840">
    <property type="entry name" value="FadR_C"/>
    <property type="match status" value="1"/>
</dbReference>
<dbReference type="Pfam" id="PF00392">
    <property type="entry name" value="GntR"/>
    <property type="match status" value="1"/>
</dbReference>
<dbReference type="PRINTS" id="PR00035">
    <property type="entry name" value="HTHGNTR"/>
</dbReference>
<dbReference type="SMART" id="SM00345">
    <property type="entry name" value="HTH_GNTR"/>
    <property type="match status" value="1"/>
</dbReference>
<dbReference type="SUPFAM" id="SSF48008">
    <property type="entry name" value="GntR ligand-binding domain-like"/>
    <property type="match status" value="1"/>
</dbReference>
<dbReference type="SUPFAM" id="SSF46785">
    <property type="entry name" value="Winged helix' DNA-binding domain"/>
    <property type="match status" value="1"/>
</dbReference>
<dbReference type="PROSITE" id="PS50949">
    <property type="entry name" value="HTH_GNTR"/>
    <property type="match status" value="1"/>
</dbReference>
<evidence type="ECO:0000255" key="1">
    <source>
        <dbReference type="HAMAP-Rule" id="MF_00696"/>
    </source>
</evidence>
<accession>B1LHY0</accession>
<feature type="chain" id="PRO_1000132319" description="Fatty acid metabolism regulator protein">
    <location>
        <begin position="1"/>
        <end position="239"/>
    </location>
</feature>
<feature type="domain" description="HTH gntR-type" evidence="1">
    <location>
        <begin position="6"/>
        <end position="74"/>
    </location>
</feature>
<feature type="DNA-binding region" description="H-T-H motif" evidence="1">
    <location>
        <begin position="34"/>
        <end position="53"/>
    </location>
</feature>
<name>FADR_ECOSM</name>
<reference key="1">
    <citation type="journal article" date="2008" name="J. Bacteriol.">
        <title>Insights into the environmental resistance gene pool from the genome sequence of the multidrug-resistant environmental isolate Escherichia coli SMS-3-5.</title>
        <authorList>
            <person name="Fricke W.F."/>
            <person name="Wright M.S."/>
            <person name="Lindell A.H."/>
            <person name="Harkins D.M."/>
            <person name="Baker-Austin C."/>
            <person name="Ravel J."/>
            <person name="Stepanauskas R."/>
        </authorList>
    </citation>
    <scope>NUCLEOTIDE SEQUENCE [LARGE SCALE GENOMIC DNA]</scope>
    <source>
        <strain>SMS-3-5 / SECEC</strain>
    </source>
</reference>
<protein>
    <recommendedName>
        <fullName evidence="1">Fatty acid metabolism regulator protein</fullName>
    </recommendedName>
</protein>
<proteinExistence type="inferred from homology"/>
<sequence length="239" mass="26969">MVIKAQSPAGFAEEYIIESIWNNRFPPGTILPAERELSELIGVTRTTLREVLQRLARDGWLTIQHGKPTKVNNFWETSGLNILETLARLDHESVPQLIDNLLSVRTNISTIFIRTAFRQHPDKAQEVLATANEVADHADAFAELDYNIFRGLAFASGNPIYGLILNGMKGLYTRIGRHYFANPEARSLALGFYHKLSALCSEGAHDQVYETVRRYGHESGEIWHRMQKNLPGDLAIQGR</sequence>